<comment type="function">
    <text evidence="1">Negative regulator of epidermal growth factor receptor (EGFR) signaling. Acts by promoting EGFR degradation in endosomes when not monoubiquitinated (By similarity).</text>
</comment>
<comment type="subcellular location">
    <subcellularLocation>
        <location>Cytoplasm</location>
        <location>Cytosol</location>
    </subcellularLocation>
    <subcellularLocation>
        <location>Early endosome membrane</location>
    </subcellularLocation>
    <text evidence="1">Localizes to early endosome membrane in absence of Lys-87 monoubiquitination. Localizes to cytosol when monoubiquitinated (By similarity).</text>
</comment>
<comment type="domain">
    <text evidence="1">The FYVE-type zinc finger mediates the interaction with phosphatidylinositol 3-phosphate (PI3P) and localization to early endosome membranes when not monoubiquitinated at Lys-87.</text>
</comment>
<comment type="PTM">
    <text evidence="1">Monoubiquitination at Lys-87 prevents binding to phosphatidylinositol 3-phosphate (PI3P) and localization to early endosome membranes.</text>
</comment>
<comment type="similarity">
    <text evidence="4">Belongs to the lst-2 family.</text>
</comment>
<keyword id="KW-0963">Cytoplasm</keyword>
<keyword id="KW-0967">Endosome</keyword>
<keyword id="KW-1017">Isopeptide bond</keyword>
<keyword id="KW-0472">Membrane</keyword>
<keyword id="KW-0479">Metal-binding</keyword>
<keyword id="KW-1185">Reference proteome</keyword>
<keyword id="KW-0832">Ubl conjugation</keyword>
<keyword id="KW-0862">Zinc</keyword>
<keyword id="KW-0863">Zinc-finger</keyword>
<dbReference type="EMBL" id="BC125831">
    <property type="protein sequence ID" value="AAI25832.1"/>
    <property type="molecule type" value="mRNA"/>
</dbReference>
<dbReference type="RefSeq" id="NP_001071191.1">
    <property type="nucleotide sequence ID" value="NM_001077723.1"/>
</dbReference>
<dbReference type="SMR" id="A0JMD2"/>
<dbReference type="FunCoup" id="A0JMD2">
    <property type="interactions" value="1183"/>
</dbReference>
<dbReference type="STRING" id="7955.ENSDARP00000116818"/>
<dbReference type="PaxDb" id="7955-ENSDARP00000116818"/>
<dbReference type="GeneID" id="777615"/>
<dbReference type="KEGG" id="dre:777615"/>
<dbReference type="AGR" id="ZFIN:ZDB-GENE-061103-208"/>
<dbReference type="CTD" id="57732"/>
<dbReference type="ZFIN" id="ZDB-GENE-061103-208">
    <property type="gene designation" value="zfyve28"/>
</dbReference>
<dbReference type="eggNOG" id="KOG1819">
    <property type="taxonomic scope" value="Eukaryota"/>
</dbReference>
<dbReference type="InParanoid" id="A0JMD2"/>
<dbReference type="OrthoDB" id="20035at2759"/>
<dbReference type="PhylomeDB" id="A0JMD2"/>
<dbReference type="PRO" id="PR:A0JMD2"/>
<dbReference type="Proteomes" id="UP000000437">
    <property type="component" value="Chromosome 17"/>
</dbReference>
<dbReference type="GO" id="GO:0005829">
    <property type="term" value="C:cytosol"/>
    <property type="evidence" value="ECO:0000250"/>
    <property type="project" value="UniProtKB"/>
</dbReference>
<dbReference type="GO" id="GO:0031901">
    <property type="term" value="C:early endosome membrane"/>
    <property type="evidence" value="ECO:0000250"/>
    <property type="project" value="UniProtKB"/>
</dbReference>
<dbReference type="GO" id="GO:0032266">
    <property type="term" value="F:phosphatidylinositol-3-phosphate binding"/>
    <property type="evidence" value="ECO:0000250"/>
    <property type="project" value="UniProtKB"/>
</dbReference>
<dbReference type="GO" id="GO:0008270">
    <property type="term" value="F:zinc ion binding"/>
    <property type="evidence" value="ECO:0007669"/>
    <property type="project" value="UniProtKB-KW"/>
</dbReference>
<dbReference type="GO" id="GO:0042059">
    <property type="term" value="P:negative regulation of epidermal growth factor receptor signaling pathway"/>
    <property type="evidence" value="ECO:0000250"/>
    <property type="project" value="UniProtKB"/>
</dbReference>
<dbReference type="GO" id="GO:0007175">
    <property type="term" value="P:negative regulation of epidermal growth factor-activated receptor activity"/>
    <property type="evidence" value="ECO:0000250"/>
    <property type="project" value="UniProtKB"/>
</dbReference>
<dbReference type="CDD" id="cd15731">
    <property type="entry name" value="FYVE_LST2"/>
    <property type="match status" value="1"/>
</dbReference>
<dbReference type="FunFam" id="3.30.40.10:FF:000092">
    <property type="entry name" value="Lateral signaling target protein 2 homolog"/>
    <property type="match status" value="1"/>
</dbReference>
<dbReference type="Gene3D" id="3.30.40.10">
    <property type="entry name" value="Zinc/RING finger domain, C3HC4 (zinc finger)"/>
    <property type="match status" value="1"/>
</dbReference>
<dbReference type="InterPro" id="IPR043269">
    <property type="entry name" value="FYVE_LST2"/>
</dbReference>
<dbReference type="InterPro" id="IPR051118">
    <property type="entry name" value="LST-2"/>
</dbReference>
<dbReference type="InterPro" id="IPR000306">
    <property type="entry name" value="Znf_FYVE"/>
</dbReference>
<dbReference type="InterPro" id="IPR017455">
    <property type="entry name" value="Znf_FYVE-rel"/>
</dbReference>
<dbReference type="InterPro" id="IPR011011">
    <property type="entry name" value="Znf_FYVE_PHD"/>
</dbReference>
<dbReference type="InterPro" id="IPR013083">
    <property type="entry name" value="Znf_RING/FYVE/PHD"/>
</dbReference>
<dbReference type="PANTHER" id="PTHR46465">
    <property type="entry name" value="LATERAL SIGNALING TARGET PROTEIN 2 HOMOLOG"/>
    <property type="match status" value="1"/>
</dbReference>
<dbReference type="PANTHER" id="PTHR46465:SF2">
    <property type="entry name" value="LATERAL SIGNALING TARGET PROTEIN 2 HOMOLOG"/>
    <property type="match status" value="1"/>
</dbReference>
<dbReference type="Pfam" id="PF01363">
    <property type="entry name" value="FYVE"/>
    <property type="match status" value="1"/>
</dbReference>
<dbReference type="SMART" id="SM00064">
    <property type="entry name" value="FYVE"/>
    <property type="match status" value="1"/>
</dbReference>
<dbReference type="SUPFAM" id="SSF57903">
    <property type="entry name" value="FYVE/PHD zinc finger"/>
    <property type="match status" value="1"/>
</dbReference>
<dbReference type="PROSITE" id="PS50178">
    <property type="entry name" value="ZF_FYVE"/>
    <property type="match status" value="1"/>
</dbReference>
<proteinExistence type="evidence at transcript level"/>
<feature type="chain" id="PRO_0000378954" description="Lateral signaling target protein 2 homolog">
    <location>
        <begin position="1"/>
        <end position="969"/>
    </location>
</feature>
<feature type="zinc finger region" description="FYVE-type" evidence="2">
    <location>
        <begin position="899"/>
        <end position="959"/>
    </location>
</feature>
<feature type="region of interest" description="Disordered" evidence="3">
    <location>
        <begin position="290"/>
        <end position="323"/>
    </location>
</feature>
<feature type="region of interest" description="Disordered" evidence="3">
    <location>
        <begin position="336"/>
        <end position="360"/>
    </location>
</feature>
<feature type="region of interest" description="Disordered" evidence="3">
    <location>
        <begin position="390"/>
        <end position="437"/>
    </location>
</feature>
<feature type="region of interest" description="Disordered" evidence="3">
    <location>
        <begin position="715"/>
        <end position="777"/>
    </location>
</feature>
<feature type="compositionally biased region" description="Polar residues" evidence="3">
    <location>
        <begin position="295"/>
        <end position="310"/>
    </location>
</feature>
<feature type="compositionally biased region" description="Basic and acidic residues" evidence="3">
    <location>
        <begin position="336"/>
        <end position="346"/>
    </location>
</feature>
<feature type="compositionally biased region" description="Polar residues" evidence="3">
    <location>
        <begin position="391"/>
        <end position="402"/>
    </location>
</feature>
<feature type="compositionally biased region" description="Low complexity" evidence="3">
    <location>
        <begin position="411"/>
        <end position="423"/>
    </location>
</feature>
<feature type="compositionally biased region" description="Basic and acidic residues" evidence="3">
    <location>
        <begin position="715"/>
        <end position="729"/>
    </location>
</feature>
<feature type="compositionally biased region" description="Low complexity" evidence="3">
    <location>
        <begin position="732"/>
        <end position="745"/>
    </location>
</feature>
<feature type="compositionally biased region" description="Low complexity" evidence="3">
    <location>
        <begin position="756"/>
        <end position="769"/>
    </location>
</feature>
<feature type="binding site" evidence="2">
    <location>
        <position position="905"/>
    </location>
    <ligand>
        <name>Zn(2+)</name>
        <dbReference type="ChEBI" id="CHEBI:29105"/>
        <label>1</label>
    </ligand>
</feature>
<feature type="binding site" evidence="2">
    <location>
        <position position="908"/>
    </location>
    <ligand>
        <name>Zn(2+)</name>
        <dbReference type="ChEBI" id="CHEBI:29105"/>
        <label>1</label>
    </ligand>
</feature>
<feature type="binding site" evidence="2">
    <location>
        <position position="921"/>
    </location>
    <ligand>
        <name>Zn(2+)</name>
        <dbReference type="ChEBI" id="CHEBI:29105"/>
        <label>2</label>
    </ligand>
</feature>
<feature type="binding site" evidence="2">
    <location>
        <position position="924"/>
    </location>
    <ligand>
        <name>Zn(2+)</name>
        <dbReference type="ChEBI" id="CHEBI:29105"/>
        <label>2</label>
    </ligand>
</feature>
<feature type="binding site" evidence="2">
    <location>
        <position position="929"/>
    </location>
    <ligand>
        <name>Zn(2+)</name>
        <dbReference type="ChEBI" id="CHEBI:29105"/>
        <label>1</label>
    </ligand>
</feature>
<feature type="binding site" evidence="2">
    <location>
        <position position="932"/>
    </location>
    <ligand>
        <name>Zn(2+)</name>
        <dbReference type="ChEBI" id="CHEBI:29105"/>
        <label>1</label>
    </ligand>
</feature>
<feature type="binding site" evidence="2">
    <location>
        <position position="951"/>
    </location>
    <ligand>
        <name>Zn(2+)</name>
        <dbReference type="ChEBI" id="CHEBI:29105"/>
        <label>2</label>
    </ligand>
</feature>
<feature type="binding site" evidence="2">
    <location>
        <position position="954"/>
    </location>
    <ligand>
        <name>Zn(2+)</name>
        <dbReference type="ChEBI" id="CHEBI:29105"/>
        <label>2</label>
    </ligand>
</feature>
<feature type="cross-link" description="Glycyl lysine isopeptide (Lys-Gly) (interchain with G-Cter in ubiquitin)" evidence="1">
    <location>
        <position position="87"/>
    </location>
</feature>
<accession>A0JMD2</accession>
<sequence length="969" mass="106964">MMNRFRKWLYKPKRSDPQLLAQFYYADEELNQVATELDSLDGRKDPQRCTLLVNQFRSCQDNVLNIINQIMDECIPEERANRDFCVKFPEEIRHDNLAGQLWFGAECLAAGSIIMNREIESMAMRPLAKDLTRSLEEVRNITRDQALRDLNHYTERIKEALRHFDGLFAEFELSYVSAMVPVKSPKEYYIQQEVIVLFCETVERALKLEYLTQDMIDDYEPALMFTIPRLAIVCGLVIYSEGPLNLDRKPEDMSELFRPFRTLLRKIRDLLQTLTEEELMTLERSLCISQDGEFPTSSTNDPSASTGPDSQTEELEKEKGVEEVVDLTLFVTQEDSVWKEEEEKQVLPESSSESEEEEPIDADLACSMQYDEEEIEQLNMMVHQVGDEMSTLLSPPSQNQSPAHRPRPYNGSSLEGSSATSSTQASPRRAPGSYHDDDRVFFMDDLESGLSSELCRGQLPLPTVCLRSPEGSSCNGWLTVCQSSDATNLGCQRKLSQSTESVGNSDRMVNGWEGLQDEDSVQTAEEIANRTGGMKLSATVIFNPHSPSLSDLAVVLPQSADAPEGGEGGALVATQCLLNSCVCCAGGCVDNHEDAMEPAGRSMALGFEKHKLTITSSVIQSAVAAGSPGKGNGHLPLTLPPSQGHLTHSVPNCSVQNQAREDEGSQDGIHYPCCEKCSPGVLLAQDRGSGHEGGPSCTLQDTGCQTQHNASVKGRSECFGKQSKDDNRKINSSSQESPLSSVPSSDIDGVSVTTCSLSSSYAPSPVSSLTTSSDMSEDLDHQEIQVALQAAKLAAHNKIRSRFHSSSDLIHRLFVCISGVADQLQTNYASDLRSILKTLFEVMATKTDQGDNEKPKKGPCLGSAVLEDCALCQETISSSELAAKAREGQFEDPPEWVPDEACNSCIACKAPFTVIRRKHHCRSCGKIFCSRCSSHSAPLPRYGQMKPVRVCTHCYMFHVTPFYSDRTGI</sequence>
<organism>
    <name type="scientific">Danio rerio</name>
    <name type="common">Zebrafish</name>
    <name type="synonym">Brachydanio rerio</name>
    <dbReference type="NCBI Taxonomy" id="7955"/>
    <lineage>
        <taxon>Eukaryota</taxon>
        <taxon>Metazoa</taxon>
        <taxon>Chordata</taxon>
        <taxon>Craniata</taxon>
        <taxon>Vertebrata</taxon>
        <taxon>Euteleostomi</taxon>
        <taxon>Actinopterygii</taxon>
        <taxon>Neopterygii</taxon>
        <taxon>Teleostei</taxon>
        <taxon>Ostariophysi</taxon>
        <taxon>Cypriniformes</taxon>
        <taxon>Danionidae</taxon>
        <taxon>Danioninae</taxon>
        <taxon>Danio</taxon>
    </lineage>
</organism>
<evidence type="ECO:0000250" key="1"/>
<evidence type="ECO:0000255" key="2">
    <source>
        <dbReference type="PROSITE-ProRule" id="PRU00091"/>
    </source>
</evidence>
<evidence type="ECO:0000256" key="3">
    <source>
        <dbReference type="SAM" id="MobiDB-lite"/>
    </source>
</evidence>
<evidence type="ECO:0000305" key="4"/>
<reference key="1">
    <citation type="submission" date="2006-10" db="EMBL/GenBank/DDBJ databases">
        <authorList>
            <consortium name="NIH - Zebrafish Gene Collection (ZGC) project"/>
        </authorList>
    </citation>
    <scope>NUCLEOTIDE SEQUENCE [LARGE SCALE MRNA]</scope>
    <source>
        <strain>AB</strain>
    </source>
</reference>
<name>LST2_DANRE</name>
<gene>
    <name type="primary">zfyve28</name>
    <name type="synonym">lst2</name>
    <name type="ORF">zgc:152894</name>
</gene>
<protein>
    <recommendedName>
        <fullName>Lateral signaling target protein 2 homolog</fullName>
    </recommendedName>
    <alternativeName>
        <fullName>Zinc finger FYVE domain-containing protein 28</fullName>
    </alternativeName>
</protein>